<name>MEN1_CANLF</name>
<sequence length="610" mass="67434">MGLKAAQKTLFPLRSIDDVVRLFAAELGREEPDLVLLSLVLGFVEHFLAVNRVIPTNVPELTFQPSPAPDPPGGLTYFPVADLSIIAALYARFTAQIRGAVDLSLYPREGGVSSRELVKKVSDVIWNSLSRSYFKDRAHIQSLFSFITGTKLDSSGVAFAVVGACQALGLRDVHLALSEDHAWVVFGPNGEQTAEVTWHGKGNEDRRGQTVNAGVAERSWLYLKGSYMRCDRKMEVAFMVCAINPSIDLHTDSLELLQLQQKLLWLLYDLGHLERYPMALGNLADLEELEPTPGRPDPLTLYHKGIASAKTYYRDEHIYPYMYLAGYHCRNRNVREALQAWADTATVIQDYNYCREDEEIYKEFFEVANDVIPNLLKEAASLLEAGEERPGEQTQGVQSQGSALQDPECFAHLLRFYDGICKWEEGSPTPVLHVGWATFLVQSLGRFEGQVRQKVRIVSREAEAAEAEELWGEEAREGRRRGPRRESKPEEPPPPKKPALDKGPGGGQGAMSGPPRKPPGTVPGTARGPEGGSTAPAPAPAASPPPEGPVLTFQSEKMKGMKELLVATKINSSAIKLQLTAQSQVQMKKQKVSTPSDYTLSFLKRQRKGL</sequence>
<reference key="1">
    <citation type="journal article" date="2007" name="J. Vet. Intern. Med.">
        <title>Inheritance, mode of inheritance, and candidate genes for primary hyperparathyroidism in Keeshonden.</title>
        <authorList>
            <person name="Goldstein R.E."/>
            <person name="Atwater D.Z."/>
            <person name="Cazolli D.M."/>
            <person name="Goldstein O."/>
            <person name="Wade C.M."/>
            <person name="Lindblad-Toh K."/>
        </authorList>
    </citation>
    <scope>NUCLEOTIDE SEQUENCE [MRNA] (ISOFORM 2)</scope>
</reference>
<feature type="chain" id="PRO_0000408472" description="Menin">
    <location>
        <begin position="1"/>
        <end position="610"/>
    </location>
</feature>
<feature type="region of interest" description="Interaction with FANCD2" evidence="1">
    <location>
        <begin position="214"/>
        <end position="390"/>
    </location>
</feature>
<feature type="region of interest" description="Disordered" evidence="3">
    <location>
        <begin position="462"/>
        <end position="552"/>
    </location>
</feature>
<feature type="compositionally biased region" description="Basic and acidic residues" evidence="3">
    <location>
        <begin position="484"/>
        <end position="500"/>
    </location>
</feature>
<feature type="compositionally biased region" description="Pro residues" evidence="3">
    <location>
        <begin position="537"/>
        <end position="548"/>
    </location>
</feature>
<feature type="modified residue" description="Phosphoserine" evidence="1">
    <location>
        <position position="487"/>
    </location>
</feature>
<feature type="modified residue" description="Phosphoserine" evidence="1">
    <location>
        <position position="543"/>
    </location>
</feature>
<feature type="modified residue" description="Phosphothreonine" evidence="1">
    <location>
        <position position="594"/>
    </location>
</feature>
<feature type="splice variant" id="VSP_062034" description="In isoform 2." evidence="4">
    <original>G</original>
    <variation>GWSPTG</variation>
    <location>
        <position position="149"/>
    </location>
</feature>
<feature type="splice variant" id="VSP_041102" description="In isoform 3." evidence="4">
    <location>
        <begin position="401"/>
        <end position="455"/>
    </location>
</feature>
<dbReference type="EMBL" id="DQ366289">
    <property type="protein sequence ID" value="ABD16380.1"/>
    <property type="molecule type" value="mRNA"/>
</dbReference>
<dbReference type="RefSeq" id="NP_001074977.1">
    <molecule id="A2SXS5-1"/>
    <property type="nucleotide sequence ID" value="NM_001081508.2"/>
</dbReference>
<dbReference type="SMR" id="A2SXS5"/>
<dbReference type="FunCoup" id="A2SXS5">
    <property type="interactions" value="1628"/>
</dbReference>
<dbReference type="STRING" id="9615.ENSCAFP00000020909"/>
<dbReference type="PaxDb" id="9612-ENSCAFP00000020910"/>
<dbReference type="Ensembl" id="ENSCAFT00030010270.1">
    <molecule id="A2SXS5-2"/>
    <property type="protein sequence ID" value="ENSCAFP00030008996.1"/>
    <property type="gene ID" value="ENSCAFG00030005512.1"/>
</dbReference>
<dbReference type="Ensembl" id="ENSCAFT00040041016.1">
    <molecule id="A2SXS5-2"/>
    <property type="protein sequence ID" value="ENSCAFP00040035760.1"/>
    <property type="gene ID" value="ENSCAFG00040022015.1"/>
</dbReference>
<dbReference type="GeneID" id="483758"/>
<dbReference type="KEGG" id="cfa:483758"/>
<dbReference type="CTD" id="4221"/>
<dbReference type="eggNOG" id="ENOG502QUYK">
    <property type="taxonomic scope" value="Eukaryota"/>
</dbReference>
<dbReference type="HOGENOM" id="CLU_018646_0_0_1"/>
<dbReference type="InParanoid" id="A2SXS5"/>
<dbReference type="OMA" id="SDVIWNG"/>
<dbReference type="OrthoDB" id="5962932at2759"/>
<dbReference type="TreeFam" id="TF323888"/>
<dbReference type="Reactome" id="R-CFA-201722">
    <property type="pathway name" value="Formation of the beta-catenin:TCF transactivating complex"/>
</dbReference>
<dbReference type="Reactome" id="R-CFA-2173796">
    <property type="pathway name" value="SMAD2/SMAD3:SMAD4 heterotrimer regulates transcription"/>
</dbReference>
<dbReference type="Reactome" id="R-CFA-381426">
    <property type="pathway name" value="Regulation of Insulin-like Growth Factor (IGF) transport and uptake by Insulin-like Growth Factor Binding Proteins (IGFBPs)"/>
</dbReference>
<dbReference type="Reactome" id="R-CFA-8957275">
    <property type="pathway name" value="Post-translational protein phosphorylation"/>
</dbReference>
<dbReference type="Reactome" id="R-CFA-9772755">
    <property type="pathway name" value="Formation of WDR5-containing histone-modifying complexes"/>
</dbReference>
<dbReference type="Proteomes" id="UP000002254">
    <property type="component" value="Unplaced"/>
</dbReference>
<dbReference type="Proteomes" id="UP000694429">
    <property type="component" value="Chromosome 18"/>
</dbReference>
<dbReference type="Proteomes" id="UP000694542">
    <property type="component" value="Chromosome 18"/>
</dbReference>
<dbReference type="Proteomes" id="UP000805418">
    <property type="component" value="Unplaced"/>
</dbReference>
<dbReference type="Bgee" id="ENSCAFG00000014185">
    <property type="expression patterns" value="Expressed in thymus and 47 other cell types or tissues"/>
</dbReference>
<dbReference type="GO" id="GO:0000785">
    <property type="term" value="C:chromatin"/>
    <property type="evidence" value="ECO:0000318"/>
    <property type="project" value="GO_Central"/>
</dbReference>
<dbReference type="GO" id="GO:0035097">
    <property type="term" value="C:histone methyltransferase complex"/>
    <property type="evidence" value="ECO:0000318"/>
    <property type="project" value="GO_Central"/>
</dbReference>
<dbReference type="GO" id="GO:0003682">
    <property type="term" value="F:chromatin binding"/>
    <property type="evidence" value="ECO:0000318"/>
    <property type="project" value="GO_Central"/>
</dbReference>
<dbReference type="GO" id="GO:0000976">
    <property type="term" value="F:transcription cis-regulatory region binding"/>
    <property type="evidence" value="ECO:0000318"/>
    <property type="project" value="GO_Central"/>
</dbReference>
<dbReference type="GO" id="GO:0000403">
    <property type="term" value="F:Y-form DNA binding"/>
    <property type="evidence" value="ECO:0000318"/>
    <property type="project" value="GO_Central"/>
</dbReference>
<dbReference type="GO" id="GO:0006325">
    <property type="term" value="P:chromatin organization"/>
    <property type="evidence" value="ECO:0007669"/>
    <property type="project" value="UniProtKB-KW"/>
</dbReference>
<dbReference type="GO" id="GO:0045786">
    <property type="term" value="P:negative regulation of cell cycle"/>
    <property type="evidence" value="ECO:0000318"/>
    <property type="project" value="GO_Central"/>
</dbReference>
<dbReference type="GO" id="GO:0008285">
    <property type="term" value="P:negative regulation of cell population proliferation"/>
    <property type="evidence" value="ECO:0000318"/>
    <property type="project" value="GO_Central"/>
</dbReference>
<dbReference type="GO" id="GO:0006357">
    <property type="term" value="P:regulation of transcription by RNA polymerase II"/>
    <property type="evidence" value="ECO:0000318"/>
    <property type="project" value="GO_Central"/>
</dbReference>
<dbReference type="CDD" id="cd14456">
    <property type="entry name" value="Menin"/>
    <property type="match status" value="1"/>
</dbReference>
<dbReference type="InterPro" id="IPR007747">
    <property type="entry name" value="Menin"/>
</dbReference>
<dbReference type="PANTHER" id="PTHR12693">
    <property type="entry name" value="MENIN"/>
    <property type="match status" value="1"/>
</dbReference>
<dbReference type="PANTHER" id="PTHR12693:SF3">
    <property type="entry name" value="MENIN"/>
    <property type="match status" value="1"/>
</dbReference>
<dbReference type="Pfam" id="PF05053">
    <property type="entry name" value="Menin"/>
    <property type="match status" value="2"/>
</dbReference>
<comment type="function">
    <text evidence="1 2">Essential component of a MLL/SET1 histone methyltransferase (HMT) complex, a complex that specifically methylates 'Lys-4' of histone H3 (H3K4). Functions as a transcriptional regulator. Binds to the TERT promoter and represses telomerase expression. Plays a role in TGFB1-mediated inhibition of cell-proliferation, possibly regulating SMAD3 transcriptional activity. Represses JUND-mediated transcriptional activation on AP1 sites, as well as that mediated by NFKB subunit RELA. Positively regulates HOXC8 and HOXC6 gene expression. May be involved in normal hematopoiesis through the activation of HOXA9 expression. May be involved in DNA repair (By similarity).</text>
</comment>
<comment type="subunit">
    <text evidence="1">Component of the MLL-HCF complex, at least composed of KMT2A/MLL1, MEN1, ASH2L, RBBP5, DPY30, WDR5, HCFC1 and HCFC2 (By similarity). Component of the menin-associated histone methyltransferase complex, at least composed of KMT2B/MLL4, MEN1, ASH2L, RBBP5, DPY30 and WDR5 (By similarity). Interacts with POLR2B (By similarity). Interacts with POLR2A phosphorylated at 'Ser-5', but not with the unphosphorylated, nor 'Ser-2' phosphorylated POLR2A forms (By similarity). Interacts with FANCD2 and DBF4 (By similarity). Interacts with SMAD3, but not with SMAD2, nor SMAD4 (By similarity). Directly interacts with NFKB1, NFKB2 and RELA (By similarity). Interacts with JUND (via MBM motif); inhibits the interaction of JUND with MAPK10 and the phosphorylation of JUND by MAP kinases MAPK8 and MAPK10 (By similarity). Interacts with KMT2A (via MBM motif) (By similarity). The KMT2A-MEN1 complex interacts with PSIP1 with a greater affinity as MEN1 enhances interaction of KMT2A with PSIP1 (By similarity).</text>
</comment>
<comment type="subcellular location">
    <subcellularLocation>
        <location evidence="1">Nucleus</location>
    </subcellularLocation>
</comment>
<comment type="alternative products">
    <event type="alternative splicing"/>
    <isoform>
        <id>A2SXS5-2</id>
        <name>1</name>
        <sequence type="displayed"/>
    </isoform>
    <isoform>
        <id>A2SXS5-1</id>
        <name>2</name>
        <sequence type="described" ref="VSP_062034"/>
    </isoform>
    <isoform>
        <id>A2SXS5-3</id>
        <name>3</name>
        <sequence type="described" ref="VSP_041102"/>
    </isoform>
</comment>
<keyword id="KW-0025">Alternative splicing</keyword>
<keyword id="KW-0156">Chromatin regulator</keyword>
<keyword id="KW-0238">DNA-binding</keyword>
<keyword id="KW-0539">Nucleus</keyword>
<keyword id="KW-0597">Phosphoprotein</keyword>
<keyword id="KW-1185">Reference proteome</keyword>
<keyword id="KW-0678">Repressor</keyword>
<keyword id="KW-0804">Transcription</keyword>
<keyword id="KW-0805">Transcription regulation</keyword>
<accession>A2SXS5</accession>
<accession>E2RDP0</accession>
<proteinExistence type="evidence at transcript level"/>
<evidence type="ECO:0000250" key="1">
    <source>
        <dbReference type="UniProtKB" id="O00255"/>
    </source>
</evidence>
<evidence type="ECO:0000250" key="2">
    <source>
        <dbReference type="UniProtKB" id="O88559"/>
    </source>
</evidence>
<evidence type="ECO:0000256" key="3">
    <source>
        <dbReference type="SAM" id="MobiDB-lite"/>
    </source>
</evidence>
<evidence type="ECO:0000305" key="4"/>
<organism>
    <name type="scientific">Canis lupus familiaris</name>
    <name type="common">Dog</name>
    <name type="synonym">Canis familiaris</name>
    <dbReference type="NCBI Taxonomy" id="9615"/>
    <lineage>
        <taxon>Eukaryota</taxon>
        <taxon>Metazoa</taxon>
        <taxon>Chordata</taxon>
        <taxon>Craniata</taxon>
        <taxon>Vertebrata</taxon>
        <taxon>Euteleostomi</taxon>
        <taxon>Mammalia</taxon>
        <taxon>Eutheria</taxon>
        <taxon>Laurasiatheria</taxon>
        <taxon>Carnivora</taxon>
        <taxon>Caniformia</taxon>
        <taxon>Canidae</taxon>
        <taxon>Canis</taxon>
    </lineage>
</organism>
<protein>
    <recommendedName>
        <fullName>Menin</fullName>
    </recommendedName>
</protein>
<gene>
    <name type="primary">MEN1</name>
</gene>